<dbReference type="EMBL" id="AM889285">
    <property type="protein sequence ID" value="CAP55123.1"/>
    <property type="molecule type" value="Genomic_DNA"/>
</dbReference>
<dbReference type="EMBL" id="CP001189">
    <property type="protein sequence ID" value="ACI51653.1"/>
    <property type="molecule type" value="Genomic_DNA"/>
</dbReference>
<dbReference type="RefSeq" id="WP_012224284.1">
    <property type="nucleotide sequence ID" value="NC_010125.1"/>
</dbReference>
<dbReference type="SMR" id="A9HDN1"/>
<dbReference type="STRING" id="272568.GDI1180"/>
<dbReference type="KEGG" id="gdi:GDI1180"/>
<dbReference type="KEGG" id="gdj:Gdia_1893"/>
<dbReference type="eggNOG" id="COG0356">
    <property type="taxonomic scope" value="Bacteria"/>
</dbReference>
<dbReference type="HOGENOM" id="CLU_041018_0_2_5"/>
<dbReference type="OrthoDB" id="9809130at2"/>
<dbReference type="Proteomes" id="UP000001176">
    <property type="component" value="Chromosome"/>
</dbReference>
<dbReference type="GO" id="GO:0005886">
    <property type="term" value="C:plasma membrane"/>
    <property type="evidence" value="ECO:0007669"/>
    <property type="project" value="UniProtKB-SubCell"/>
</dbReference>
<dbReference type="GO" id="GO:0045259">
    <property type="term" value="C:proton-transporting ATP synthase complex"/>
    <property type="evidence" value="ECO:0007669"/>
    <property type="project" value="UniProtKB-KW"/>
</dbReference>
<dbReference type="GO" id="GO:0046933">
    <property type="term" value="F:proton-transporting ATP synthase activity, rotational mechanism"/>
    <property type="evidence" value="ECO:0007669"/>
    <property type="project" value="UniProtKB-UniRule"/>
</dbReference>
<dbReference type="CDD" id="cd00310">
    <property type="entry name" value="ATP-synt_Fo_a_6"/>
    <property type="match status" value="1"/>
</dbReference>
<dbReference type="Gene3D" id="1.20.120.220">
    <property type="entry name" value="ATP synthase, F0 complex, subunit A"/>
    <property type="match status" value="1"/>
</dbReference>
<dbReference type="HAMAP" id="MF_01393">
    <property type="entry name" value="ATP_synth_a_bact"/>
    <property type="match status" value="1"/>
</dbReference>
<dbReference type="InterPro" id="IPR000568">
    <property type="entry name" value="ATP_synth_F0_asu"/>
</dbReference>
<dbReference type="InterPro" id="IPR023011">
    <property type="entry name" value="ATP_synth_F0_asu_AS"/>
</dbReference>
<dbReference type="InterPro" id="IPR045083">
    <property type="entry name" value="ATP_synth_F0_asu_bact/mt"/>
</dbReference>
<dbReference type="InterPro" id="IPR035908">
    <property type="entry name" value="F0_ATP_A_sf"/>
</dbReference>
<dbReference type="NCBIfam" id="TIGR01131">
    <property type="entry name" value="ATP_synt_6_or_A"/>
    <property type="match status" value="1"/>
</dbReference>
<dbReference type="NCBIfam" id="NF004482">
    <property type="entry name" value="PRK05815.2-4"/>
    <property type="match status" value="1"/>
</dbReference>
<dbReference type="PANTHER" id="PTHR11410">
    <property type="entry name" value="ATP SYNTHASE SUBUNIT A"/>
    <property type="match status" value="1"/>
</dbReference>
<dbReference type="PANTHER" id="PTHR11410:SF0">
    <property type="entry name" value="ATP SYNTHASE SUBUNIT A"/>
    <property type="match status" value="1"/>
</dbReference>
<dbReference type="Pfam" id="PF00119">
    <property type="entry name" value="ATP-synt_A"/>
    <property type="match status" value="1"/>
</dbReference>
<dbReference type="PRINTS" id="PR00123">
    <property type="entry name" value="ATPASEA"/>
</dbReference>
<dbReference type="SUPFAM" id="SSF81336">
    <property type="entry name" value="F1F0 ATP synthase subunit A"/>
    <property type="match status" value="1"/>
</dbReference>
<dbReference type="PROSITE" id="PS00449">
    <property type="entry name" value="ATPASE_A"/>
    <property type="match status" value="1"/>
</dbReference>
<evidence type="ECO:0000255" key="1">
    <source>
        <dbReference type="HAMAP-Rule" id="MF_01393"/>
    </source>
</evidence>
<organism>
    <name type="scientific">Gluconacetobacter diazotrophicus (strain ATCC 49037 / DSM 5601 / CCUG 37298 / CIP 103539 / LMG 7603 / PAl5)</name>
    <dbReference type="NCBI Taxonomy" id="272568"/>
    <lineage>
        <taxon>Bacteria</taxon>
        <taxon>Pseudomonadati</taxon>
        <taxon>Pseudomonadota</taxon>
        <taxon>Alphaproteobacteria</taxon>
        <taxon>Acetobacterales</taxon>
        <taxon>Acetobacteraceae</taxon>
        <taxon>Gluconacetobacter</taxon>
    </lineage>
</organism>
<protein>
    <recommendedName>
        <fullName evidence="1">ATP synthase subunit a</fullName>
    </recommendedName>
    <alternativeName>
        <fullName evidence="1">ATP synthase F0 sector subunit a</fullName>
    </alternativeName>
    <alternativeName>
        <fullName evidence="1">F-ATPase subunit 6</fullName>
    </alternativeName>
</protein>
<sequence>MAAGSTIDALGQFELHPVLGGLGESLRFSQSPVMMIVASVLVLAFLYVGMRPAAIVPGRLQAAAEICYDFIHDMAVDTIGPEGRAFFPFIFTLFFFILAGNYLGLLPFSFAFTSHIAVTLALALLVFVLAVIVSLKAQGPKFFAHFMPAGAPVALAPLLVPIEILSFLSRPVSLSIRLFANMVAGHVMLEMFAAFTIMLAGLGLFGDVLAVGPVVINVALMALELLVGALQAYVFAILTCIYLREAVAH</sequence>
<accession>A9HDN1</accession>
<reference key="1">
    <citation type="journal article" date="2009" name="BMC Genomics">
        <title>Complete genome sequence of the sugarcane nitrogen-fixing endophyte Gluconacetobacter diazotrophicus Pal5.</title>
        <authorList>
            <person name="Bertalan M."/>
            <person name="Albano R."/>
            <person name="de Padua V."/>
            <person name="Rouws L."/>
            <person name="Rojas C."/>
            <person name="Hemerly A."/>
            <person name="Teixeira K."/>
            <person name="Schwab S."/>
            <person name="Araujo J."/>
            <person name="Oliveira A."/>
            <person name="Franca L."/>
            <person name="Magalhaes V."/>
            <person name="Alqueres S."/>
            <person name="Cardoso A."/>
            <person name="Almeida W."/>
            <person name="Loureiro M.M."/>
            <person name="Nogueira E."/>
            <person name="Cidade D."/>
            <person name="Oliveira D."/>
            <person name="Simao T."/>
            <person name="Macedo J."/>
            <person name="Valadao A."/>
            <person name="Dreschsel M."/>
            <person name="Freitas F."/>
            <person name="Vidal M."/>
            <person name="Guedes H."/>
            <person name="Rodrigues E."/>
            <person name="Meneses C."/>
            <person name="Brioso P."/>
            <person name="Pozzer L."/>
            <person name="Figueiredo D."/>
            <person name="Montano H."/>
            <person name="Junior J."/>
            <person name="de Souza Filho G."/>
            <person name="Martin Quintana Flores V."/>
            <person name="Ferreira B."/>
            <person name="Branco A."/>
            <person name="Gonzalez P."/>
            <person name="Guillobel H."/>
            <person name="Lemos M."/>
            <person name="Seibel L."/>
            <person name="Macedo J."/>
            <person name="Alves-Ferreira M."/>
            <person name="Sachetto-Martins G."/>
            <person name="Coelho A."/>
            <person name="Santos E."/>
            <person name="Amaral G."/>
            <person name="Neves A."/>
            <person name="Pacheco A.B."/>
            <person name="Carvalho D."/>
            <person name="Lery L."/>
            <person name="Bisch P."/>
            <person name="Rossle S.C."/>
            <person name="Urmenyi T."/>
            <person name="Rael Pereira A."/>
            <person name="Silva R."/>
            <person name="Rondinelli E."/>
            <person name="von Kruger W."/>
            <person name="Martins O."/>
            <person name="Baldani J.I."/>
            <person name="Ferreira P.C."/>
        </authorList>
    </citation>
    <scope>NUCLEOTIDE SEQUENCE [LARGE SCALE GENOMIC DNA]</scope>
    <source>
        <strain>ATCC 49037 / DSM 5601 / CCUG 37298 / CIP 103539 / LMG 7603 / PAl5</strain>
    </source>
</reference>
<reference key="2">
    <citation type="journal article" date="2010" name="Stand. Genomic Sci.">
        <title>Two genome sequences of the same bacterial strain, Gluconacetobacter diazotrophicus PAl 5, suggest a new standard in genome sequence submission.</title>
        <authorList>
            <person name="Giongo A."/>
            <person name="Tyler H.L."/>
            <person name="Zipperer U.N."/>
            <person name="Triplett E.W."/>
        </authorList>
    </citation>
    <scope>NUCLEOTIDE SEQUENCE [LARGE SCALE GENOMIC DNA]</scope>
    <source>
        <strain>ATCC 49037 / DSM 5601 / CCUG 37298 / CIP 103539 / LMG 7603 / PAl5</strain>
    </source>
</reference>
<feature type="chain" id="PRO_0000362316" description="ATP synthase subunit a">
    <location>
        <begin position="1"/>
        <end position="249"/>
    </location>
</feature>
<feature type="transmembrane region" description="Helical" evidence="1">
    <location>
        <begin position="30"/>
        <end position="50"/>
    </location>
</feature>
<feature type="transmembrane region" description="Helical" evidence="1">
    <location>
        <begin position="86"/>
        <end position="106"/>
    </location>
</feature>
<feature type="transmembrane region" description="Helical" evidence="1">
    <location>
        <begin position="115"/>
        <end position="135"/>
    </location>
</feature>
<feature type="transmembrane region" description="Helical" evidence="1">
    <location>
        <begin position="142"/>
        <end position="162"/>
    </location>
</feature>
<feature type="transmembrane region" description="Helical" evidence="1">
    <location>
        <begin position="191"/>
        <end position="211"/>
    </location>
</feature>
<feature type="transmembrane region" description="Helical" evidence="1">
    <location>
        <begin position="218"/>
        <end position="238"/>
    </location>
</feature>
<gene>
    <name evidence="1" type="primary">atpB</name>
    <name type="ordered locus">GDI1180</name>
    <name type="ordered locus">Gdia_1893</name>
</gene>
<name>ATP6_GLUDA</name>
<comment type="function">
    <text evidence="1">Key component of the proton channel; it plays a direct role in the translocation of protons across the membrane.</text>
</comment>
<comment type="subunit">
    <text evidence="1">F-type ATPases have 2 components, CF(1) - the catalytic core - and CF(0) - the membrane proton channel. CF(1) has five subunits: alpha(3), beta(3), gamma(1), delta(1), epsilon(1). CF(0) has three main subunits: a(1), b(2) and c(9-12). The alpha and beta chains form an alternating ring which encloses part of the gamma chain. CF(1) is attached to CF(0) by a central stalk formed by the gamma and epsilon chains, while a peripheral stalk is formed by the delta and b chains.</text>
</comment>
<comment type="subcellular location">
    <subcellularLocation>
        <location evidence="1">Cell inner membrane</location>
        <topology evidence="1">Multi-pass membrane protein</topology>
    </subcellularLocation>
</comment>
<comment type="similarity">
    <text evidence="1">Belongs to the ATPase A chain family.</text>
</comment>
<keyword id="KW-0066">ATP synthesis</keyword>
<keyword id="KW-0997">Cell inner membrane</keyword>
<keyword id="KW-1003">Cell membrane</keyword>
<keyword id="KW-0138">CF(0)</keyword>
<keyword id="KW-0375">Hydrogen ion transport</keyword>
<keyword id="KW-0406">Ion transport</keyword>
<keyword id="KW-0472">Membrane</keyword>
<keyword id="KW-1185">Reference proteome</keyword>
<keyword id="KW-0812">Transmembrane</keyword>
<keyword id="KW-1133">Transmembrane helix</keyword>
<keyword id="KW-0813">Transport</keyword>
<proteinExistence type="inferred from homology"/>